<protein>
    <recommendedName>
        <fullName evidence="1">Uncharacterized protein C19orf85</fullName>
    </recommendedName>
</protein>
<gene>
    <name evidence="2" type="primary">C19orf85</name>
</gene>
<keyword id="KW-1185">Reference proteome</keyword>
<dbReference type="EMBL" id="AC008735">
    <property type="status" value="NOT_ANNOTATED_CDS"/>
    <property type="molecule type" value="Genomic_DNA"/>
</dbReference>
<dbReference type="EMBL" id="HY225770">
    <property type="status" value="NOT_ANNOTATED_CDS"/>
    <property type="molecule type" value="mRNA"/>
</dbReference>
<dbReference type="EMBL" id="AI968795">
    <property type="status" value="NOT_ANNOTATED_CDS"/>
    <property type="molecule type" value="mRNA"/>
</dbReference>
<dbReference type="CCDS" id="CCDS92691.1"/>
<dbReference type="RefSeq" id="NP_001373723.1">
    <property type="nucleotide sequence ID" value="NM_001386794.1"/>
</dbReference>
<dbReference type="SMR" id="A0A1B0GUS0"/>
<dbReference type="STRING" id="9606.ENSP00000490220"/>
<dbReference type="GlyGen" id="A0A1B0GUS0">
    <property type="glycosylation" value="1 site"/>
</dbReference>
<dbReference type="BioMuta" id="ENSG00000283567"/>
<dbReference type="PeptideAtlas" id="A0A1B0GUS0"/>
<dbReference type="Ensembl" id="ENST00000635964.2">
    <property type="protein sequence ID" value="ENSP00000490220.1"/>
    <property type="gene ID" value="ENSG00000283567.2"/>
</dbReference>
<dbReference type="GeneID" id="111064650"/>
<dbReference type="MANE-Select" id="ENST00000635964.2">
    <property type="protein sequence ID" value="ENSP00000490220.1"/>
    <property type="RefSeq nucleotide sequence ID" value="NM_001386794.1"/>
    <property type="RefSeq protein sequence ID" value="NP_001373723.1"/>
</dbReference>
<dbReference type="AGR" id="HGNC:53653"/>
<dbReference type="GeneCards" id="C19orf85"/>
<dbReference type="HGNC" id="HGNC:53653">
    <property type="gene designation" value="C19orf85"/>
</dbReference>
<dbReference type="HPA" id="ENSG00000283567">
    <property type="expression patterns" value="Not detected"/>
</dbReference>
<dbReference type="neXtProt" id="NX_A0A1B0GUS0"/>
<dbReference type="VEuPathDB" id="HostDB:ENSG00000283567"/>
<dbReference type="GeneTree" id="ENSGT00850000133583"/>
<dbReference type="InParanoid" id="A0A1B0GUS0"/>
<dbReference type="OMA" id="AWDSQGI"/>
<dbReference type="OrthoDB" id="8922503at2759"/>
<dbReference type="PAN-GO" id="A0A1B0GUS0">
    <property type="GO annotations" value="0 GO annotations based on evolutionary models"/>
</dbReference>
<dbReference type="Pharos" id="A0A1B0GUS0">
    <property type="development level" value="Tdark"/>
</dbReference>
<dbReference type="PRO" id="PR:A0A1B0GUS0"/>
<dbReference type="Proteomes" id="UP000005640">
    <property type="component" value="Chromosome 19"/>
</dbReference>
<dbReference type="RNAct" id="A0A1B0GUS0">
    <property type="molecule type" value="protein"/>
</dbReference>
<dbReference type="Bgee" id="ENSG00000283567">
    <property type="expression patterns" value="Expressed in primordial germ cell in gonad and 15 other cell types or tissues"/>
</dbReference>
<organism>
    <name type="scientific">Homo sapiens</name>
    <name type="common">Human</name>
    <dbReference type="NCBI Taxonomy" id="9606"/>
    <lineage>
        <taxon>Eukaryota</taxon>
        <taxon>Metazoa</taxon>
        <taxon>Chordata</taxon>
        <taxon>Craniata</taxon>
        <taxon>Vertebrata</taxon>
        <taxon>Euteleostomi</taxon>
        <taxon>Mammalia</taxon>
        <taxon>Eutheria</taxon>
        <taxon>Euarchontoglires</taxon>
        <taxon>Primates</taxon>
        <taxon>Haplorrhini</taxon>
        <taxon>Catarrhini</taxon>
        <taxon>Hominidae</taxon>
        <taxon>Homo</taxon>
    </lineage>
</organism>
<proteinExistence type="evidence at transcript level"/>
<sequence length="222" mass="23875">MHPGVPEGPGVSEPGPRELCAFVSGAAAHMLRALQPRRTRPPKRRPNHRRFLHNQICRQFTKIEAATQRLALSILSQEAPPQRPSLQKPPPPPPSPFLGVACAVAPTEAPHASASLSLAALDTSTLDLFDNIALTPECASMPWDPSSGSDAPLPAPGLSHRDLGQLDLRQVPHFCGPLPLPQHALGEEADLVAPDWGWVDCWEVPRAWDSQGIPEGWGTSSP</sequence>
<evidence type="ECO:0000305" key="1"/>
<evidence type="ECO:0000312" key="2">
    <source>
        <dbReference type="HGNC" id="HGNC:53653"/>
    </source>
</evidence>
<name>CS085_HUMAN</name>
<feature type="chain" id="PRO_0000442935" description="Uncharacterized protein C19orf85">
    <location>
        <begin position="1"/>
        <end position="222"/>
    </location>
</feature>
<reference key="1">
    <citation type="journal article" date="2004" name="Nature">
        <title>The DNA sequence and biology of human chromosome 19.</title>
        <authorList>
            <person name="Grimwood J."/>
            <person name="Gordon L.A."/>
            <person name="Olsen A.S."/>
            <person name="Terry A."/>
            <person name="Schmutz J."/>
            <person name="Lamerdin J.E."/>
            <person name="Hellsten U."/>
            <person name="Goodstein D."/>
            <person name="Couronne O."/>
            <person name="Tran-Gyamfi M."/>
            <person name="Aerts A."/>
            <person name="Altherr M."/>
            <person name="Ashworth L."/>
            <person name="Bajorek E."/>
            <person name="Black S."/>
            <person name="Branscomb E."/>
            <person name="Caenepeel S."/>
            <person name="Carrano A.V."/>
            <person name="Caoile C."/>
            <person name="Chan Y.M."/>
            <person name="Christensen M."/>
            <person name="Cleland C.A."/>
            <person name="Copeland A."/>
            <person name="Dalin E."/>
            <person name="Dehal P."/>
            <person name="Denys M."/>
            <person name="Detter J.C."/>
            <person name="Escobar J."/>
            <person name="Flowers D."/>
            <person name="Fotopulos D."/>
            <person name="Garcia C."/>
            <person name="Georgescu A.M."/>
            <person name="Glavina T."/>
            <person name="Gomez M."/>
            <person name="Gonzales E."/>
            <person name="Groza M."/>
            <person name="Hammon N."/>
            <person name="Hawkins T."/>
            <person name="Haydu L."/>
            <person name="Ho I."/>
            <person name="Huang W."/>
            <person name="Israni S."/>
            <person name="Jett J."/>
            <person name="Kadner K."/>
            <person name="Kimball H."/>
            <person name="Kobayashi A."/>
            <person name="Larionov V."/>
            <person name="Leem S.-H."/>
            <person name="Lopez F."/>
            <person name="Lou Y."/>
            <person name="Lowry S."/>
            <person name="Malfatti S."/>
            <person name="Martinez D."/>
            <person name="McCready P.M."/>
            <person name="Medina C."/>
            <person name="Morgan J."/>
            <person name="Nelson K."/>
            <person name="Nolan M."/>
            <person name="Ovcharenko I."/>
            <person name="Pitluck S."/>
            <person name="Pollard M."/>
            <person name="Popkie A.P."/>
            <person name="Predki P."/>
            <person name="Quan G."/>
            <person name="Ramirez L."/>
            <person name="Rash S."/>
            <person name="Retterer J."/>
            <person name="Rodriguez A."/>
            <person name="Rogers S."/>
            <person name="Salamov A."/>
            <person name="Salazar A."/>
            <person name="She X."/>
            <person name="Smith D."/>
            <person name="Slezak T."/>
            <person name="Solovyev V."/>
            <person name="Thayer N."/>
            <person name="Tice H."/>
            <person name="Tsai M."/>
            <person name="Ustaszewska A."/>
            <person name="Vo N."/>
            <person name="Wagner M."/>
            <person name="Wheeler J."/>
            <person name="Wu K."/>
            <person name="Xie G."/>
            <person name="Yang J."/>
            <person name="Dubchak I."/>
            <person name="Furey T.S."/>
            <person name="DeJong P."/>
            <person name="Dickson M."/>
            <person name="Gordon D."/>
            <person name="Eichler E.E."/>
            <person name="Pennacchio L.A."/>
            <person name="Richardson P."/>
            <person name="Stubbs L."/>
            <person name="Rokhsar D.S."/>
            <person name="Myers R.M."/>
            <person name="Rubin E.M."/>
            <person name="Lucas S.M."/>
        </authorList>
    </citation>
    <scope>NUCLEOTIDE SEQUENCE [LARGE SCALE GENOMIC DNA]</scope>
</reference>
<reference key="2">
    <citation type="submission" date="2012-05" db="EMBL/GenBank/DDBJ databases">
        <authorList>
            <person name="Arakawa T."/>
            <person name="Carninci P."/>
            <person name="Fukuda S."/>
            <person name="Hasegawa A."/>
            <person name="Hayashida K."/>
            <person name="Hori F."/>
            <person name="Kai C."/>
            <person name="Kawai J."/>
            <person name="Kojima M."/>
            <person name="Murata M."/>
            <person name="Nakamura M."/>
            <person name="Nishiyori H."/>
            <person name="Nomura K."/>
            <person name="Ohno M."/>
            <person name="Sasaki D."/>
            <person name="Shibazaki E."/>
            <person name="Tagami M."/>
            <person name="Tagami Y."/>
            <person name="Hayashizaki Y."/>
        </authorList>
    </citation>
    <scope>NUCLEOTIDE SEQUENCE [LARGE SCALE MRNA] OF 1-84</scope>
</reference>
<reference key="3">
    <citation type="journal article" date="2004" name="Genome Res.">
        <title>The status, quality, and expansion of the NIH full-length cDNA project: the Mammalian Gene Collection (MGC).</title>
        <authorList>
            <consortium name="The MGC Project Team"/>
        </authorList>
    </citation>
    <scope>NUCLEOTIDE SEQUENCE [LARGE SCALE MRNA] OF 38-165</scope>
</reference>
<accession>A0A1B0GUS0</accession>